<gene>
    <name evidence="4" type="primary">dnpp-1</name>
    <name evidence="4" type="ORF">F01F1.9</name>
</gene>
<comment type="function">
    <text evidence="2">Aminopeptidase with specificity towards an acidic amino acid at the N-terminus. Plays a role in membrane trafficking and is specifically involved in the recycling and degradation of endocytic cargo.</text>
</comment>
<comment type="catalytic activity">
    <reaction evidence="2">
        <text>Release of an N-terminal aspartate or glutamate from a peptide, with a preference for aspartate.</text>
        <dbReference type="EC" id="3.4.11.21"/>
    </reaction>
</comment>
<comment type="cofactor">
    <cofactor evidence="1">
        <name>Zn(2+)</name>
        <dbReference type="ChEBI" id="CHEBI:29105"/>
    </cofactor>
    <text evidence="1">Binds 2 Zn(2+) ions per subunit.</text>
</comment>
<comment type="biophysicochemical properties">
    <kinetics>
        <KM evidence="2">13.58 mM for H-Asp-NHMec (at pH 7.5)</KM>
        <KM evidence="2">8.854 mM for H-Glu-NHMec (at pH 7.5)</KM>
    </kinetics>
</comment>
<comment type="subunit">
    <text evidence="1">Tetrahedron-shaped homododecamer built from six homodimers.</text>
</comment>
<comment type="interaction">
    <interactant intactId="EBI-367822">
        <id>Q19087</id>
    </interactant>
    <interactant intactId="EBI-367822">
        <id>Q19087</id>
        <label>dnpp-1</label>
    </interactant>
    <organismsDiffer>false</organismsDiffer>
    <experiments>3</experiments>
</comment>
<comment type="subcellular location">
    <subcellularLocation>
        <location evidence="2">Cytoplasm</location>
        <location evidence="2">Cytosol</location>
    </subcellularLocation>
    <text evidence="2">Diffuse expression in the cytosol.</text>
</comment>
<comment type="tissue specificity">
    <text evidence="2">Expressed in various cell types and tissues including the pharynx, neurons, body wall muscle, intestine and vulva.</text>
</comment>
<comment type="developmental stage">
    <text evidence="2">Expressed from the embryonic stage to adulthood.</text>
</comment>
<comment type="disruption phenotype">
    <text evidence="2">Animals are viable. Suppresses the abnormal formation of intestinal vacuoles phenotype in mutants lacking the phospholipid-transporting ATPase tat-1 or its chaperone chat-1.</text>
</comment>
<comment type="similarity">
    <text evidence="3">Belongs to the peptidase M18 family.</text>
</comment>
<protein>
    <recommendedName>
        <fullName evidence="4">Aspartyl aminopeptidase</fullName>
        <ecNumber evidence="2">3.4.11.21</ecNumber>
    </recommendedName>
</protein>
<organism>
    <name type="scientific">Caenorhabditis elegans</name>
    <dbReference type="NCBI Taxonomy" id="6239"/>
    <lineage>
        <taxon>Eukaryota</taxon>
        <taxon>Metazoa</taxon>
        <taxon>Ecdysozoa</taxon>
        <taxon>Nematoda</taxon>
        <taxon>Chromadorea</taxon>
        <taxon>Rhabditida</taxon>
        <taxon>Rhabditina</taxon>
        <taxon>Rhabditomorpha</taxon>
        <taxon>Rhabditoidea</taxon>
        <taxon>Rhabditidae</taxon>
        <taxon>Peloderinae</taxon>
        <taxon>Caenorhabditis</taxon>
    </lineage>
</organism>
<proteinExistence type="evidence at protein level"/>
<feature type="chain" id="PRO_0000173453" description="Aspartyl aminopeptidase" evidence="3">
    <location>
        <begin position="1"/>
        <end position="470"/>
    </location>
</feature>
<feature type="binding site" evidence="1">
    <location>
        <position position="92"/>
    </location>
    <ligand>
        <name>Zn(2+)</name>
        <dbReference type="ChEBI" id="CHEBI:29105"/>
        <label>1</label>
    </ligand>
</feature>
<feature type="binding site" evidence="1">
    <location>
        <position position="166"/>
    </location>
    <ligand>
        <name>substrate</name>
    </ligand>
</feature>
<feature type="binding site" evidence="1">
    <location>
        <position position="263"/>
    </location>
    <ligand>
        <name>Zn(2+)</name>
        <dbReference type="ChEBI" id="CHEBI:29105"/>
        <label>1</label>
    </ligand>
</feature>
<feature type="binding site" evidence="1">
    <location>
        <position position="263"/>
    </location>
    <ligand>
        <name>Zn(2+)</name>
        <dbReference type="ChEBI" id="CHEBI:29105"/>
        <label>2</label>
    </ligand>
</feature>
<feature type="binding site" evidence="1">
    <location>
        <position position="299"/>
    </location>
    <ligand>
        <name>substrate</name>
    </ligand>
</feature>
<feature type="binding site" evidence="1">
    <location>
        <position position="300"/>
    </location>
    <ligand>
        <name>Zn(2+)</name>
        <dbReference type="ChEBI" id="CHEBI:29105"/>
        <label>2</label>
    </ligand>
</feature>
<feature type="binding site" evidence="1">
    <location>
        <position position="343"/>
    </location>
    <ligand>
        <name>substrate</name>
    </ligand>
</feature>
<feature type="binding site" evidence="1">
    <location>
        <position position="343"/>
    </location>
    <ligand>
        <name>Zn(2+)</name>
        <dbReference type="ChEBI" id="CHEBI:29105"/>
        <label>1</label>
    </ligand>
</feature>
<feature type="binding site" evidence="1">
    <location>
        <position position="346"/>
    </location>
    <ligand>
        <name>substrate</name>
    </ligand>
</feature>
<feature type="binding site" evidence="1">
    <location>
        <position position="371"/>
    </location>
    <ligand>
        <name>substrate</name>
    </ligand>
</feature>
<feature type="binding site" evidence="1">
    <location>
        <position position="378"/>
    </location>
    <ligand>
        <name>substrate</name>
    </ligand>
</feature>
<feature type="binding site" evidence="1">
    <location>
        <position position="437"/>
    </location>
    <ligand>
        <name>Zn(2+)</name>
        <dbReference type="ChEBI" id="CHEBI:29105"/>
        <label>2</label>
    </ligand>
</feature>
<feature type="mutagenesis site" description="In M3; results in loss of enzymatic activity; when associated with F-166 and F-437." evidence="2">
    <original>H</original>
    <variation>F</variation>
    <location>
        <position position="92"/>
    </location>
</feature>
<feature type="mutagenesis site" description="In M3; results in loss of enzymatic activity; when associated with F-92 and F-437." evidence="2">
    <original>H</original>
    <variation>F</variation>
    <location>
        <position position="166"/>
    </location>
</feature>
<feature type="mutagenesis site" description="In qx49; loss of enzymatic activity." evidence="2">
    <original>E</original>
    <variation>L</variation>
    <location>
        <position position="331"/>
    </location>
</feature>
<feature type="mutagenesis site" description="In M3; results in loss of enzymatic activity; when associated with F-92 and F-166." evidence="2">
    <original>H</original>
    <variation>F</variation>
    <location>
        <position position="437"/>
    </location>
</feature>
<name>DNPEP_CAEEL</name>
<sequence>MAAALKPSAPEIRKAAQEFINYLNKAVTPFHATQEVKDRLLQAGFTELPESGHWDIQPTSKYFVTKNRSAILAFAVGGSYKPGSGFSIVVGHTDSPCLRVKPISHQKSDKFLQVGVSTYGGGIWRTWFDRDLSVAGLVIVKNGEKLQHKLIDVKKPVLFIPNLAIHLETDRTTFKPNTETELRPILETFAAAGINAPQKPESTGFADPRNITNNHHPQFLGLIAKEAGCQPEDIVDLDLYLYDTNKAAIVGMEDEFISGARLDNQVGTYTAISGLLESLTGESFKNDPQIRIAACFDNEEVGSDSAMGASSSFTEFVLRRLSAGGSTTAFEEAIGKSMLISADQAHATHPNYSAKHEENHRPAFHGGVVVKVNVNQRYATTSTTHAALKQVAFEAQVPLQVVVVRNDSPCGSTVGPILATKLGLQTVDVGCPQLAMHSIREFADTSSIYQATTLYSTFYERLSTVLSNMQ</sequence>
<evidence type="ECO:0000250" key="1">
    <source>
        <dbReference type="UniProtKB" id="Q9ULA0"/>
    </source>
</evidence>
<evidence type="ECO:0000269" key="2">
    <source>
    </source>
</evidence>
<evidence type="ECO:0000305" key="3"/>
<evidence type="ECO:0000312" key="4">
    <source>
        <dbReference type="WormBase" id="F01F1.9b"/>
    </source>
</evidence>
<reference key="1">
    <citation type="journal article" date="1998" name="Science">
        <title>Genome sequence of the nematode C. elegans: a platform for investigating biology.</title>
        <authorList>
            <consortium name="The C. elegans sequencing consortium"/>
        </authorList>
    </citation>
    <scope>NUCLEOTIDE SEQUENCE [LARGE SCALE GENOMIC DNA]</scope>
    <source>
        <strain>Bristol N2</strain>
    </source>
</reference>
<reference key="2">
    <citation type="journal article" date="2013" name="Mol. Biol. Cell">
        <title>Inactivation of Caenorhabditis elegans aminopeptidase DNPP-1 restores endocytic sorting and recycling in tat-1 mutants.</title>
        <authorList>
            <person name="Li X."/>
            <person name="Chen B."/>
            <person name="Yoshina S."/>
            <person name="Cai T."/>
            <person name="Yang F."/>
            <person name="Mitani S."/>
            <person name="Wang X."/>
        </authorList>
    </citation>
    <scope>FUNCTION</scope>
    <scope>CATALYTIC ACTIVITY</scope>
    <scope>BIOPHYSICOCHEMICAL PROPERTIES</scope>
    <scope>SUBCELLULAR LOCATION</scope>
    <scope>TISSUE SPECIFICITY</scope>
    <scope>DEVELOPMENTAL STAGE</scope>
    <scope>DISRUPTION PHENOTYPE</scope>
    <scope>MUTAGENESIS OF HIS-92; HIS-166; GLU-331 AND HIS-437</scope>
</reference>
<dbReference type="EC" id="3.4.11.21" evidence="2"/>
<dbReference type="EMBL" id="BX284603">
    <property type="protein sequence ID" value="CCD65992.1"/>
    <property type="molecule type" value="Genomic_DNA"/>
</dbReference>
<dbReference type="PIR" id="T15946">
    <property type="entry name" value="T15946"/>
</dbReference>
<dbReference type="RefSeq" id="NP_498265.1">
    <property type="nucleotide sequence ID" value="NM_065864.8"/>
</dbReference>
<dbReference type="SMR" id="Q19087"/>
<dbReference type="BioGRID" id="41044">
    <property type="interactions" value="36"/>
</dbReference>
<dbReference type="FunCoup" id="Q19087">
    <property type="interactions" value="2254"/>
</dbReference>
<dbReference type="IntAct" id="Q19087">
    <property type="interactions" value="2"/>
</dbReference>
<dbReference type="STRING" id="6239.F01F1.9a.1"/>
<dbReference type="MEROPS" id="M18.002"/>
<dbReference type="PaxDb" id="6239-F01F1.9"/>
<dbReference type="PeptideAtlas" id="Q19087"/>
<dbReference type="EnsemblMetazoa" id="F01F1.9b.1">
    <property type="protein sequence ID" value="F01F1.9b.1"/>
    <property type="gene ID" value="WBGene00017163"/>
</dbReference>
<dbReference type="GeneID" id="175822"/>
<dbReference type="KEGG" id="cel:CELE_F01F1.9"/>
<dbReference type="UCSC" id="F01F1.9">
    <property type="organism name" value="c. elegans"/>
</dbReference>
<dbReference type="AGR" id="WB:WBGene00017163"/>
<dbReference type="CTD" id="175822"/>
<dbReference type="WormBase" id="F01F1.9b">
    <property type="protein sequence ID" value="CE01235"/>
    <property type="gene ID" value="WBGene00017163"/>
    <property type="gene designation" value="dnpp-1"/>
</dbReference>
<dbReference type="eggNOG" id="KOG2596">
    <property type="taxonomic scope" value="Eukaryota"/>
</dbReference>
<dbReference type="HOGENOM" id="CLU_019532_2_0_1"/>
<dbReference type="InParanoid" id="Q19087"/>
<dbReference type="OMA" id="GPILKVN"/>
<dbReference type="OrthoDB" id="9880441at2759"/>
<dbReference type="PhylomeDB" id="Q19087"/>
<dbReference type="PRO" id="PR:Q19087"/>
<dbReference type="Proteomes" id="UP000001940">
    <property type="component" value="Chromosome III"/>
</dbReference>
<dbReference type="Bgee" id="WBGene00017163">
    <property type="expression patterns" value="Expressed in material anatomical entity and 5 other cell types or tissues"/>
</dbReference>
<dbReference type="ExpressionAtlas" id="Q19087">
    <property type="expression patterns" value="baseline and differential"/>
</dbReference>
<dbReference type="GO" id="GO:0005829">
    <property type="term" value="C:cytosol"/>
    <property type="evidence" value="ECO:0000314"/>
    <property type="project" value="WormBase"/>
</dbReference>
<dbReference type="GO" id="GO:0042802">
    <property type="term" value="F:identical protein binding"/>
    <property type="evidence" value="ECO:0000353"/>
    <property type="project" value="IntAct"/>
</dbReference>
<dbReference type="GO" id="GO:0070006">
    <property type="term" value="F:metalloaminopeptidase activity"/>
    <property type="evidence" value="ECO:0000314"/>
    <property type="project" value="WormBase"/>
</dbReference>
<dbReference type="GO" id="GO:0008270">
    <property type="term" value="F:zinc ion binding"/>
    <property type="evidence" value="ECO:0007669"/>
    <property type="project" value="InterPro"/>
</dbReference>
<dbReference type="GO" id="GO:0016197">
    <property type="term" value="P:endosomal transport"/>
    <property type="evidence" value="ECO:0000316"/>
    <property type="project" value="WormBase"/>
</dbReference>
<dbReference type="GO" id="GO:0006508">
    <property type="term" value="P:proteolysis"/>
    <property type="evidence" value="ECO:0007669"/>
    <property type="project" value="UniProtKB-KW"/>
</dbReference>
<dbReference type="CDD" id="cd05658">
    <property type="entry name" value="M18_DAP"/>
    <property type="match status" value="1"/>
</dbReference>
<dbReference type="FunFam" id="2.30.250.10:FF:000001">
    <property type="entry name" value="Aspartyl aminopeptidase 1"/>
    <property type="match status" value="1"/>
</dbReference>
<dbReference type="Gene3D" id="2.30.250.10">
    <property type="entry name" value="Aminopeptidase i, Domain 2"/>
    <property type="match status" value="1"/>
</dbReference>
<dbReference type="Gene3D" id="3.40.630.10">
    <property type="entry name" value="Zn peptidases"/>
    <property type="match status" value="1"/>
</dbReference>
<dbReference type="InterPro" id="IPR001948">
    <property type="entry name" value="Peptidase_M18"/>
</dbReference>
<dbReference type="InterPro" id="IPR023358">
    <property type="entry name" value="Peptidase_M18_dom2"/>
</dbReference>
<dbReference type="NCBIfam" id="NF002759">
    <property type="entry name" value="PRK02813.1"/>
    <property type="match status" value="1"/>
</dbReference>
<dbReference type="PANTHER" id="PTHR28570">
    <property type="entry name" value="ASPARTYL AMINOPEPTIDASE"/>
    <property type="match status" value="1"/>
</dbReference>
<dbReference type="PANTHER" id="PTHR28570:SF3">
    <property type="entry name" value="ASPARTYL AMINOPEPTIDASE"/>
    <property type="match status" value="1"/>
</dbReference>
<dbReference type="Pfam" id="PF02127">
    <property type="entry name" value="Peptidase_M18"/>
    <property type="match status" value="1"/>
</dbReference>
<dbReference type="PRINTS" id="PR00932">
    <property type="entry name" value="AMINO1PTASE"/>
</dbReference>
<dbReference type="SUPFAM" id="SSF101821">
    <property type="entry name" value="Aminopeptidase/glucanase lid domain"/>
    <property type="match status" value="1"/>
</dbReference>
<dbReference type="SUPFAM" id="SSF53187">
    <property type="entry name" value="Zn-dependent exopeptidases"/>
    <property type="match status" value="1"/>
</dbReference>
<accession>Q19087</accession>
<keyword id="KW-0031">Aminopeptidase</keyword>
<keyword id="KW-0963">Cytoplasm</keyword>
<keyword id="KW-0378">Hydrolase</keyword>
<keyword id="KW-0479">Metal-binding</keyword>
<keyword id="KW-0482">Metalloprotease</keyword>
<keyword id="KW-0645">Protease</keyword>
<keyword id="KW-1185">Reference proteome</keyword>
<keyword id="KW-0862">Zinc</keyword>